<gene>
    <name evidence="3" type="primary">ERG28</name>
    <name evidence="3" type="synonym">C14orf1</name>
    <name type="ORF">AD-011</name>
    <name type="ORF">HSPC288</name>
    <name type="ORF">x0006</name>
</gene>
<feature type="chain" id="PRO_0000193903" description="Ergosterol biosynthetic protein 28 homolog">
    <location>
        <begin position="1"/>
        <end position="140"/>
    </location>
</feature>
<feature type="transmembrane region" description="Helical" evidence="1">
    <location>
        <begin position="4"/>
        <end position="24"/>
    </location>
</feature>
<feature type="transmembrane region" description="Helical" evidence="1">
    <location>
        <begin position="52"/>
        <end position="72"/>
    </location>
</feature>
<feature type="transmembrane region" description="Helical" evidence="1">
    <location>
        <begin position="79"/>
        <end position="99"/>
    </location>
</feature>
<feature type="transmembrane region" description="Helical" evidence="1">
    <location>
        <begin position="105"/>
        <end position="125"/>
    </location>
</feature>
<protein>
    <recommendedName>
        <fullName>Ergosterol biosynthetic protein 28 homolog</fullName>
    </recommendedName>
</protein>
<sequence length="140" mass="15864">MSRFLNVLRSWLVMVSIIAMGNTLQSFRDHTFLYEKLYTGKPNLVNGLQARTFGIWTLLSSVIRCLCAIDIHNKTLYHITLWTFLLALGHFLSELFVYGTAAPTIGVLAPLMVASFSILGMLVGLRYLEVEPVSRQKKRN</sequence>
<comment type="interaction">
    <interactant intactId="EBI-711490">
        <id>Q9UKR5</id>
    </interactant>
    <interactant intactId="EBI-12701138">
        <id>P41181</id>
        <label>AQP2</label>
    </interactant>
    <organismsDiffer>false</organismsDiffer>
    <experiments>3</experiments>
</comment>
<comment type="interaction">
    <interactant intactId="EBI-711490">
        <id>Q9UKR5</id>
    </interactant>
    <interactant intactId="EBI-2808854">
        <id>Q92482</id>
        <label>AQP3</label>
    </interactant>
    <organismsDiffer>false</organismsDiffer>
    <experiments>3</experiments>
</comment>
<comment type="interaction">
    <interactant intactId="EBI-711490">
        <id>Q9UKR5</id>
    </interactant>
    <interactant intactId="EBI-13059134">
        <id>Q13520</id>
        <label>AQP6</label>
    </interactant>
    <organismsDiffer>false</organismsDiffer>
    <experiments>3</experiments>
</comment>
<comment type="interaction">
    <interactant intactId="EBI-711490">
        <id>Q9UKR5</id>
    </interactant>
    <interactant intactId="EBI-747430">
        <id>Q9BXK5</id>
        <label>BCL2L13</label>
    </interactant>
    <organismsDiffer>false</organismsDiffer>
    <experiments>3</experiments>
</comment>
<comment type="interaction">
    <interactant intactId="EBI-711490">
        <id>Q9UKR5</id>
    </interactant>
    <interactant intactId="EBI-6657396">
        <id>P19397</id>
        <label>CD53</label>
    </interactant>
    <organismsDiffer>false</organismsDiffer>
    <experiments>3</experiments>
</comment>
<comment type="interaction">
    <interactant intactId="EBI-711490">
        <id>Q9UKR5</id>
    </interactant>
    <interactant intactId="EBI-12222807">
        <id>P04233-2</id>
        <label>CD74</label>
    </interactant>
    <organismsDiffer>false</organismsDiffer>
    <experiments>3</experiments>
</comment>
<comment type="interaction">
    <interactant intactId="EBI-711490">
        <id>Q9UKR5</id>
    </interactant>
    <interactant intactId="EBI-18400628">
        <id>O00501</id>
        <label>CLDN5</label>
    </interactant>
    <organismsDiffer>false</organismsDiffer>
    <experiments>3</experiments>
</comment>
<comment type="interaction">
    <interactant intactId="EBI-711490">
        <id>Q9UKR5</id>
    </interactant>
    <interactant intactId="EBI-740744">
        <id>O95471</id>
        <label>CLDN7</label>
    </interactant>
    <organismsDiffer>false</organismsDiffer>
    <experiments>3</experiments>
</comment>
<comment type="interaction">
    <interactant intactId="EBI-711490">
        <id>Q9UKR5</id>
    </interactant>
    <interactant intactId="EBI-6942903">
        <id>Q96BA8</id>
        <label>CREB3L1</label>
    </interactant>
    <organismsDiffer>false</organismsDiffer>
    <experiments>3</experiments>
</comment>
<comment type="interaction">
    <interactant intactId="EBI-711490">
        <id>Q9UKR5</id>
    </interactant>
    <interactant intactId="EBI-8646596">
        <id>P49447</id>
        <label>CYB561</label>
    </interactant>
    <organismsDiffer>false</organismsDiffer>
    <experiments>3</experiments>
</comment>
<comment type="interaction">
    <interactant intactId="EBI-711490">
        <id>Q9UKR5</id>
    </interactant>
    <interactant intactId="EBI-3915253">
        <id>Q15125</id>
        <label>EBP</label>
    </interactant>
    <organismsDiffer>false</organismsDiffer>
    <experiments>3</experiments>
</comment>
<comment type="interaction">
    <interactant intactId="EBI-711490">
        <id>Q9UKR5</id>
    </interactant>
    <interactant intactId="EBI-18535450">
        <id>Q9GZR5</id>
        <label>ELOVL4</label>
    </interactant>
    <organismsDiffer>false</organismsDiffer>
    <experiments>3</experiments>
</comment>
<comment type="interaction">
    <interactant intactId="EBI-711490">
        <id>Q9UKR5</id>
    </interactant>
    <interactant intactId="EBI-711490">
        <id>Q9UKR5</id>
        <label>ERG28</label>
    </interactant>
    <organismsDiffer>false</organismsDiffer>
    <experiments>3</experiments>
</comment>
<comment type="interaction">
    <interactant intactId="EBI-711490">
        <id>Q9UKR5</id>
    </interactant>
    <interactant intactId="EBI-18636064">
        <id>Q8TBP5</id>
        <label>FAM174A</label>
    </interactant>
    <organismsDiffer>false</organismsDiffer>
    <experiments>3</experiments>
</comment>
<comment type="interaction">
    <interactant intactId="EBI-711490">
        <id>Q9UKR5</id>
    </interactant>
    <interactant intactId="EBI-18304435">
        <id>Q5JX71</id>
        <label>FAM209A</label>
    </interactant>
    <organismsDiffer>false</organismsDiffer>
    <experiments>3</experiments>
</comment>
<comment type="interaction">
    <interactant intactId="EBI-711490">
        <id>Q9UKR5</id>
    </interactant>
    <interactant intactId="EBI-2833872">
        <id>O15552</id>
        <label>FFAR2</label>
    </interactant>
    <organismsDiffer>false</organismsDiffer>
    <experiments>3</experiments>
</comment>
<comment type="interaction">
    <interactant intactId="EBI-711490">
        <id>Q9UKR5</id>
    </interactant>
    <interactant intactId="EBI-12175685">
        <id>Q14802-3</id>
        <label>FXYD3</label>
    </interactant>
    <organismsDiffer>false</organismsDiffer>
    <experiments>3</experiments>
</comment>
<comment type="interaction">
    <interactant intactId="EBI-711490">
        <id>Q9UKR5</id>
    </interactant>
    <interactant intactId="EBI-18908258">
        <id>O00258</id>
        <label>GET1</label>
    </interactant>
    <organismsDiffer>false</organismsDiffer>
    <experiments>3</experiments>
</comment>
<comment type="interaction">
    <interactant intactId="EBI-711490">
        <id>Q9UKR5</id>
    </interactant>
    <interactant intactId="EBI-3909454">
        <id>O95377</id>
        <label>GJB5</label>
    </interactant>
    <organismsDiffer>false</organismsDiffer>
    <experiments>3</experiments>
</comment>
<comment type="interaction">
    <interactant intactId="EBI-711490">
        <id>Q9UKR5</id>
    </interactant>
    <interactant intactId="EBI-13345167">
        <id>Q8TDT2</id>
        <label>GPR152</label>
    </interactant>
    <organismsDiffer>false</organismsDiffer>
    <experiments>3</experiments>
</comment>
<comment type="interaction">
    <interactant intactId="EBI-711490">
        <id>Q9UKR5</id>
    </interactant>
    <interactant intactId="EBI-2927498">
        <id>O60883</id>
        <label>GPR37L1</label>
    </interactant>
    <organismsDiffer>false</organismsDiffer>
    <experiments>3</experiments>
</comment>
<comment type="interaction">
    <interactant intactId="EBI-711490">
        <id>Q9UKR5</id>
    </interactant>
    <interactant intactId="EBI-11721746">
        <id>Q8TED1</id>
        <label>GPX8</label>
    </interactant>
    <organismsDiffer>false</organismsDiffer>
    <experiments>3</experiments>
</comment>
<comment type="interaction">
    <interactant intactId="EBI-711490">
        <id>Q9UKR5</id>
    </interactant>
    <interactant intactId="EBI-1052304">
        <id>Q8NBQ5</id>
        <label>HSD17B11</label>
    </interactant>
    <organismsDiffer>false</organismsDiffer>
    <experiments>3</experiments>
</comment>
<comment type="interaction">
    <interactant intactId="EBI-711490">
        <id>Q9UKR5</id>
    </interactant>
    <interactant intactId="EBI-10266796">
        <id>Q8N5M9</id>
        <label>JAGN1</label>
    </interactant>
    <organismsDiffer>false</organismsDiffer>
    <experiments>3</experiments>
</comment>
<comment type="interaction">
    <interactant intactId="EBI-711490">
        <id>Q9UKR5</id>
    </interactant>
    <interactant intactId="EBI-12017638">
        <id>P48051</id>
        <label>KCNJ6</label>
    </interactant>
    <organismsDiffer>false</organismsDiffer>
    <experiments>3</experiments>
</comment>
<comment type="interaction">
    <interactant intactId="EBI-711490">
        <id>Q9UKR5</id>
    </interactant>
    <interactant intactId="EBI-2820517">
        <id>Q8TAF8</id>
        <label>LHFPL5</label>
    </interactant>
    <organismsDiffer>false</organismsDiffer>
    <experiments>3</experiments>
</comment>
<comment type="interaction">
    <interactant intactId="EBI-711490">
        <id>Q9UKR5</id>
    </interactant>
    <interactant intactId="EBI-17200970">
        <id>Q6UWN5</id>
        <label>LYPD5</label>
    </interactant>
    <organismsDiffer>false</organismsDiffer>
    <experiments>3</experiments>
</comment>
<comment type="interaction">
    <interactant intactId="EBI-711490">
        <id>Q9UKR5</id>
    </interactant>
    <interactant intactId="EBI-373355">
        <id>Q5SR56</id>
        <label>MFSD14B</label>
    </interactant>
    <organismsDiffer>false</organismsDiffer>
    <experiments>3</experiments>
</comment>
<comment type="interaction">
    <interactant intactId="EBI-711490">
        <id>Q9UKR5</id>
    </interactant>
    <interactant intactId="EBI-724754">
        <id>O14880</id>
        <label>MGST3</label>
    </interactant>
    <organismsDiffer>false</organismsDiffer>
    <experiments>3</experiments>
</comment>
<comment type="interaction">
    <interactant intactId="EBI-711490">
        <id>Q9UKR5</id>
    </interactant>
    <interactant intactId="EBI-5454865">
        <id>Q6IN84</id>
        <label>MRM1</label>
    </interactant>
    <organismsDiffer>false</organismsDiffer>
    <experiments>3</experiments>
</comment>
<comment type="interaction">
    <interactant intactId="EBI-711490">
        <id>Q9UKR5</id>
    </interactant>
    <interactant intactId="EBI-12806656">
        <id>Q96HJ5</id>
        <label>MS4A3</label>
    </interactant>
    <organismsDiffer>false</organismsDiffer>
    <experiments>3</experiments>
</comment>
<comment type="interaction">
    <interactant intactId="EBI-711490">
        <id>Q9UKR5</id>
    </interactant>
    <interactant intactId="EBI-949102">
        <id>Q15800</id>
        <label>MSMO1</label>
    </interactant>
    <organismsDiffer>false</organismsDiffer>
    <experiments>3</experiments>
</comment>
<comment type="interaction">
    <interactant intactId="EBI-711490">
        <id>Q9UKR5</id>
    </interactant>
    <interactant intactId="EBI-7825321">
        <id>Q96E29</id>
        <label>MTERF3</label>
    </interactant>
    <organismsDiffer>false</organismsDiffer>
    <experiments>3</experiments>
</comment>
<comment type="interaction">
    <interactant intactId="EBI-711490">
        <id>Q9UKR5</id>
    </interactant>
    <interactant intactId="EBI-17263240">
        <id>P15941-11</id>
        <label>MUC1</label>
    </interactant>
    <organismsDiffer>false</organismsDiffer>
    <experiments>3</experiments>
</comment>
<comment type="interaction">
    <interactant intactId="EBI-711490">
        <id>Q9UKR5</id>
    </interactant>
    <interactant intactId="EBI-14061804">
        <id>Q68D85</id>
        <label>NCR3LG1</label>
    </interactant>
    <organismsDiffer>false</organismsDiffer>
    <experiments>3</experiments>
</comment>
<comment type="interaction">
    <interactant intactId="EBI-711490">
        <id>Q9UKR5</id>
    </interactant>
    <interactant intactId="EBI-1246131">
        <id>O95167</id>
        <label>NDUFA3</label>
    </interactant>
    <organismsDiffer>false</organismsDiffer>
    <experiments>3</experiments>
</comment>
<comment type="interaction">
    <interactant intactId="EBI-711490">
        <id>Q9UKR5</id>
    </interactant>
    <interactant intactId="EBI-716063">
        <id>Q13113</id>
        <label>PDZK1IP1</label>
    </interactant>
    <organismsDiffer>false</organismsDiffer>
    <experiments>3</experiments>
</comment>
<comment type="interaction">
    <interactant intactId="EBI-711490">
        <id>Q9UKR5</id>
    </interactant>
    <interactant intactId="EBI-3920125">
        <id>Q3MUY2</id>
        <label>PIGY</label>
    </interactant>
    <organismsDiffer>false</organismsDiffer>
    <experiments>3</experiments>
</comment>
<comment type="interaction">
    <interactant intactId="EBI-711490">
        <id>Q9UKR5</id>
    </interactant>
    <interactant intactId="EBI-7545592">
        <id>Q9H6H4</id>
        <label>REEP4</label>
    </interactant>
    <organismsDiffer>false</organismsDiffer>
    <experiments>3</experiments>
</comment>
<comment type="interaction">
    <interactant intactId="EBI-711490">
        <id>Q9UKR5</id>
    </interactant>
    <interactant intactId="EBI-10192441">
        <id>Q86VR2</id>
        <label>RETREG3</label>
    </interactant>
    <organismsDiffer>false</organismsDiffer>
    <experiments>3</experiments>
</comment>
<comment type="interaction">
    <interactant intactId="EBI-711490">
        <id>Q9UKR5</id>
    </interactant>
    <interactant intactId="EBI-3920694">
        <id>Q9NR31</id>
        <label>SAR1A</label>
    </interactant>
    <organismsDiffer>false</organismsDiffer>
    <experiments>3</experiments>
</comment>
<comment type="interaction">
    <interactant intactId="EBI-711490">
        <id>Q9UKR5</id>
    </interactant>
    <interactant intactId="EBI-17247926">
        <id>Q9NY72</id>
        <label>SCN3B</label>
    </interactant>
    <organismsDiffer>false</organismsDiffer>
    <experiments>4</experiments>
</comment>
<comment type="interaction">
    <interactant intactId="EBI-711490">
        <id>Q9UKR5</id>
    </interactant>
    <interactant intactId="EBI-1046170">
        <id>O95470</id>
        <label>SGPL1</label>
    </interactant>
    <organismsDiffer>false</organismsDiffer>
    <experiments>3</experiments>
</comment>
<comment type="interaction">
    <interactant intactId="EBI-711490">
        <id>Q9UKR5</id>
    </interactant>
    <interactant intactId="EBI-18159983">
        <id>Q3KNW5</id>
        <label>SLC10A6</label>
    </interactant>
    <organismsDiffer>false</organismsDiffer>
    <experiments>3</experiments>
</comment>
<comment type="interaction">
    <interactant intactId="EBI-711490">
        <id>Q9UKR5</id>
    </interactant>
    <interactant intactId="EBI-12814225">
        <id>Q9BXS9-3</id>
        <label>SLC26A6</label>
    </interactant>
    <organismsDiffer>false</organismsDiffer>
    <experiments>3</experiments>
</comment>
<comment type="interaction">
    <interactant intactId="EBI-711490">
        <id>Q9UKR5</id>
    </interactant>
    <interactant intactId="EBI-12811757">
        <id>O95436-2</id>
        <label>SLC34A2</label>
    </interactant>
    <organismsDiffer>false</organismsDiffer>
    <experiments>3</experiments>
</comment>
<comment type="interaction">
    <interactant intactId="EBI-711490">
        <id>Q9UKR5</id>
    </interactant>
    <interactant intactId="EBI-17280858">
        <id>Q8WWF3</id>
        <label>SSMEM1</label>
    </interactant>
    <organismsDiffer>false</organismsDiffer>
    <experiments>3</experiments>
</comment>
<comment type="interaction">
    <interactant intactId="EBI-711490">
        <id>Q9UKR5</id>
    </interactant>
    <interactant intactId="EBI-1211440">
        <id>P27105</id>
        <label>STOM</label>
    </interactant>
    <organismsDiffer>false</organismsDiffer>
    <experiments>3</experiments>
</comment>
<comment type="interaction">
    <interactant intactId="EBI-711490">
        <id>Q9UKR5</id>
    </interactant>
    <interactant intactId="EBI-712466">
        <id>Q16623</id>
        <label>STX1A</label>
    </interactant>
    <organismsDiffer>false</organismsDiffer>
    <experiments>3</experiments>
</comment>
<comment type="interaction">
    <interactant intactId="EBI-711490">
        <id>Q9UKR5</id>
    </interactant>
    <interactant intactId="EBI-12947623">
        <id>Q96MV1</id>
        <label>TLCD4</label>
    </interactant>
    <organismsDiffer>false</organismsDiffer>
    <experiments>3</experiments>
</comment>
<comment type="interaction">
    <interactant intactId="EBI-711490">
        <id>Q9UKR5</id>
    </interactant>
    <interactant intactId="EBI-6448756">
        <id>Q96DZ7</id>
        <label>TM4SF19</label>
    </interactant>
    <organismsDiffer>false</organismsDiffer>
    <experiments>3</experiments>
</comment>
<comment type="interaction">
    <interactant intactId="EBI-711490">
        <id>Q9UKR5</id>
    </interactant>
    <interactant intactId="EBI-3915978">
        <id>Q96A25</id>
        <label>TMEM106A</label>
    </interactant>
    <organismsDiffer>false</organismsDiffer>
    <experiments>3</experiments>
</comment>
<comment type="interaction">
    <interactant intactId="EBI-711490">
        <id>Q9UKR5</id>
    </interactant>
    <interactant intactId="EBI-347385">
        <id>Q9H0R3</id>
        <label>TMEM222</label>
    </interactant>
    <organismsDiffer>false</organismsDiffer>
    <experiments>3</experiments>
</comment>
<comment type="interaction">
    <interactant intactId="EBI-711490">
        <id>Q9UKR5</id>
    </interactant>
    <interactant intactId="EBI-12345267">
        <id>O15393-2</id>
        <label>TMPRSS2</label>
    </interactant>
    <organismsDiffer>false</organismsDiffer>
    <experiments>3</experiments>
</comment>
<comment type="subcellular location">
    <subcellularLocation>
        <location evidence="2">Endoplasmic reticulum membrane</location>
        <topology evidence="2">Multi-pass membrane protein</topology>
    </subcellularLocation>
</comment>
<comment type="tissue specificity">
    <text>Ubiquitous; strongly expressed in testis and some cancer cell lines.</text>
</comment>
<comment type="similarity">
    <text evidence="2">Belongs to the ERG28 family.</text>
</comment>
<comment type="sequence caution" evidence="2">
    <conflict type="erroneous gene model prediction">
        <sequence resource="EMBL-CDS" id="AAD51373"/>
    </conflict>
</comment>
<comment type="sequence caution" evidence="2">
    <conflict type="erroneous initiation">
        <sequence resource="EMBL-CDS" id="AAF28966"/>
    </conflict>
</comment>
<accession>Q9UKR5</accession>
<accession>Q9P093</accession>
<accession>Q9UPI2</accession>
<keyword id="KW-0256">Endoplasmic reticulum</keyword>
<keyword id="KW-0444">Lipid biosynthesis</keyword>
<keyword id="KW-0443">Lipid metabolism</keyword>
<keyword id="KW-0472">Membrane</keyword>
<keyword id="KW-1267">Proteomics identification</keyword>
<keyword id="KW-1185">Reference proteome</keyword>
<keyword id="KW-0752">Steroid biosynthesis</keyword>
<keyword id="KW-0753">Steroid metabolism</keyword>
<keyword id="KW-0756">Sterol biosynthesis</keyword>
<keyword id="KW-1207">Sterol metabolism</keyword>
<keyword id="KW-0812">Transmembrane</keyword>
<keyword id="KW-1133">Transmembrane helix</keyword>
<proteinExistence type="evidence at protein level"/>
<dbReference type="EMBL" id="AF134159">
    <property type="protein sequence ID" value="AAD54079.1"/>
    <property type="molecule type" value="mRNA"/>
</dbReference>
<dbReference type="EMBL" id="AF161406">
    <property type="protein sequence ID" value="AAF28966.1"/>
    <property type="status" value="ALT_INIT"/>
    <property type="molecule type" value="mRNA"/>
</dbReference>
<dbReference type="EMBL" id="AL136658">
    <property type="protein sequence ID" value="CAB66593.1"/>
    <property type="molecule type" value="mRNA"/>
</dbReference>
<dbReference type="EMBL" id="AF136971">
    <property type="protein sequence ID" value="AAG49432.1"/>
    <property type="molecule type" value="mRNA"/>
</dbReference>
<dbReference type="EMBL" id="AC007182">
    <property type="protein sequence ID" value="AAD51373.1"/>
    <property type="status" value="ALT_SEQ"/>
    <property type="molecule type" value="Genomic_DNA"/>
</dbReference>
<dbReference type="EMBL" id="BC002444">
    <property type="protein sequence ID" value="AAH02444.1"/>
    <property type="molecule type" value="mRNA"/>
</dbReference>
<dbReference type="CCDS" id="CCDS9845.1"/>
<dbReference type="RefSeq" id="NP_009107.1">
    <property type="nucleotide sequence ID" value="NM_007176.4"/>
</dbReference>
<dbReference type="BioGRID" id="116332">
    <property type="interactions" value="140"/>
</dbReference>
<dbReference type="FunCoup" id="Q9UKR5">
    <property type="interactions" value="709"/>
</dbReference>
<dbReference type="IntAct" id="Q9UKR5">
    <property type="interactions" value="123"/>
</dbReference>
<dbReference type="MINT" id="Q9UKR5"/>
<dbReference type="STRING" id="9606.ENSP00000256319"/>
<dbReference type="iPTMnet" id="Q9UKR5"/>
<dbReference type="PhosphoSitePlus" id="Q9UKR5"/>
<dbReference type="SwissPalm" id="Q9UKR5"/>
<dbReference type="BioMuta" id="ERG28"/>
<dbReference type="DMDM" id="13431328"/>
<dbReference type="jPOST" id="Q9UKR5"/>
<dbReference type="MassIVE" id="Q9UKR5"/>
<dbReference type="PaxDb" id="9606-ENSP00000256319"/>
<dbReference type="PeptideAtlas" id="Q9UKR5"/>
<dbReference type="ProteomicsDB" id="84841"/>
<dbReference type="Pumba" id="Q9UKR5"/>
<dbReference type="TopDownProteomics" id="Q9UKR5"/>
<dbReference type="Antibodypedia" id="51644">
    <property type="antibodies" value="62 antibodies from 14 providers"/>
</dbReference>
<dbReference type="DNASU" id="11161"/>
<dbReference type="Ensembl" id="ENST00000256319.7">
    <property type="protein sequence ID" value="ENSP00000256319.6"/>
    <property type="gene ID" value="ENSG00000133935.7"/>
</dbReference>
<dbReference type="GeneID" id="11161"/>
<dbReference type="KEGG" id="hsa:11161"/>
<dbReference type="MANE-Select" id="ENST00000256319.7">
    <property type="protein sequence ID" value="ENSP00000256319.6"/>
    <property type="RefSeq nucleotide sequence ID" value="NM_007176.4"/>
    <property type="RefSeq protein sequence ID" value="NP_009107.1"/>
</dbReference>
<dbReference type="UCSC" id="uc001xrt.4">
    <property type="organism name" value="human"/>
</dbReference>
<dbReference type="AGR" id="HGNC:1187"/>
<dbReference type="CTD" id="11161"/>
<dbReference type="DisGeNET" id="11161"/>
<dbReference type="GeneCards" id="ERG28"/>
<dbReference type="HGNC" id="HGNC:1187">
    <property type="gene designation" value="ERG28"/>
</dbReference>
<dbReference type="HPA" id="ENSG00000133935">
    <property type="expression patterns" value="Low tissue specificity"/>
</dbReference>
<dbReference type="MIM" id="604576">
    <property type="type" value="gene"/>
</dbReference>
<dbReference type="neXtProt" id="NX_Q9UKR5"/>
<dbReference type="OpenTargets" id="ENSG00000133935"/>
<dbReference type="PharmGKB" id="PA25513"/>
<dbReference type="VEuPathDB" id="HostDB:ENSG00000133935"/>
<dbReference type="eggNOG" id="KOG3455">
    <property type="taxonomic scope" value="Eukaryota"/>
</dbReference>
<dbReference type="GeneTree" id="ENSGT00390000010925"/>
<dbReference type="HOGENOM" id="CLU_114589_2_0_1"/>
<dbReference type="InParanoid" id="Q9UKR5"/>
<dbReference type="OMA" id="NIAIWTY"/>
<dbReference type="OrthoDB" id="6485510at2759"/>
<dbReference type="PAN-GO" id="Q9UKR5">
    <property type="GO annotations" value="2 GO annotations based on evolutionary models"/>
</dbReference>
<dbReference type="PhylomeDB" id="Q9UKR5"/>
<dbReference type="TreeFam" id="TF300191"/>
<dbReference type="PathwayCommons" id="Q9UKR5"/>
<dbReference type="SignaLink" id="Q9UKR5"/>
<dbReference type="BioGRID-ORCS" id="11161">
    <property type="hits" value="16 hits in 1153 CRISPR screens"/>
</dbReference>
<dbReference type="ChiTaRS" id="C14orf1">
    <property type="organism name" value="human"/>
</dbReference>
<dbReference type="GeneWiki" id="C14orf1"/>
<dbReference type="GenomeRNAi" id="11161"/>
<dbReference type="Pharos" id="Q9UKR5">
    <property type="development level" value="Tbio"/>
</dbReference>
<dbReference type="PRO" id="PR:Q9UKR5"/>
<dbReference type="Proteomes" id="UP000005640">
    <property type="component" value="Chromosome 14"/>
</dbReference>
<dbReference type="RNAct" id="Q9UKR5">
    <property type="molecule type" value="protein"/>
</dbReference>
<dbReference type="Bgee" id="ENSG00000133935">
    <property type="expression patterns" value="Expressed in oocyte and 209 other cell types or tissues"/>
</dbReference>
<dbReference type="ExpressionAtlas" id="Q9UKR5">
    <property type="expression patterns" value="baseline and differential"/>
</dbReference>
<dbReference type="GO" id="GO:0005783">
    <property type="term" value="C:endoplasmic reticulum"/>
    <property type="evidence" value="ECO:0000318"/>
    <property type="project" value="GO_Central"/>
</dbReference>
<dbReference type="GO" id="GO:0005789">
    <property type="term" value="C:endoplasmic reticulum membrane"/>
    <property type="evidence" value="ECO:0007669"/>
    <property type="project" value="UniProtKB-SubCell"/>
</dbReference>
<dbReference type="GO" id="GO:0016020">
    <property type="term" value="C:membrane"/>
    <property type="evidence" value="ECO:0000303"/>
    <property type="project" value="UniProtKB"/>
</dbReference>
<dbReference type="GO" id="GO:0030133">
    <property type="term" value="C:transport vesicle"/>
    <property type="evidence" value="ECO:0000314"/>
    <property type="project" value="LIFEdb"/>
</dbReference>
<dbReference type="GO" id="GO:0042802">
    <property type="term" value="F:identical protein binding"/>
    <property type="evidence" value="ECO:0000353"/>
    <property type="project" value="IntAct"/>
</dbReference>
<dbReference type="GO" id="GO:0030674">
    <property type="term" value="F:protein-macromolecule adaptor activity"/>
    <property type="evidence" value="ECO:0000318"/>
    <property type="project" value="GO_Central"/>
</dbReference>
<dbReference type="GO" id="GO:0016126">
    <property type="term" value="P:sterol biosynthetic process"/>
    <property type="evidence" value="ECO:0007669"/>
    <property type="project" value="UniProtKB-KW"/>
</dbReference>
<dbReference type="InterPro" id="IPR005352">
    <property type="entry name" value="Erg28"/>
</dbReference>
<dbReference type="PANTHER" id="PTHR15451:SF19">
    <property type="entry name" value="ERGOSTEROL BIOSYNTHETIC PROTEIN 28 HOMOLOG"/>
    <property type="match status" value="1"/>
</dbReference>
<dbReference type="PANTHER" id="PTHR15451">
    <property type="entry name" value="ERGOSTEROL BIOSYNTHETIC PROTEIN 28-RELATED"/>
    <property type="match status" value="1"/>
</dbReference>
<dbReference type="Pfam" id="PF03694">
    <property type="entry name" value="Erg28"/>
    <property type="match status" value="1"/>
</dbReference>
<reference key="1">
    <citation type="journal article" date="1999" name="Cytogenet. Cell Genet.">
        <title>A novel human gene, encoding a potential membrane protein conserved from yeast to man, is strongly expressed in testis and cancer cell lines.</title>
        <authorList>
            <person name="Veitia R.A."/>
            <person name="Ottolenghi C."/>
            <person name="Bissery M.-C."/>
            <person name="Fellous A."/>
        </authorList>
    </citation>
    <scope>NUCLEOTIDE SEQUENCE [MRNA]</scope>
</reference>
<reference key="2">
    <citation type="journal article" date="2000" name="Genome Res.">
        <title>Cloning and functional analysis of cDNAs with open reading frames for 300 previously undefined genes expressed in CD34+ hematopoietic stem/progenitor cells.</title>
        <authorList>
            <person name="Zhang Q.-H."/>
            <person name="Ye M."/>
            <person name="Wu X.-Y."/>
            <person name="Ren S.-X."/>
            <person name="Zhao M."/>
            <person name="Zhao C.-J."/>
            <person name="Fu G."/>
            <person name="Shen Y."/>
            <person name="Fan H.-Y."/>
            <person name="Lu G."/>
            <person name="Zhong M."/>
            <person name="Xu X.-R."/>
            <person name="Han Z.-G."/>
            <person name="Zhang J.-W."/>
            <person name="Tao J."/>
            <person name="Huang Q.-H."/>
            <person name="Zhou J."/>
            <person name="Hu G.-X."/>
            <person name="Gu J."/>
            <person name="Chen S.-J."/>
            <person name="Chen Z."/>
        </authorList>
    </citation>
    <scope>NUCLEOTIDE SEQUENCE [LARGE SCALE MRNA]</scope>
    <source>
        <tissue>Umbilical cord blood</tissue>
    </source>
</reference>
<reference key="3">
    <citation type="journal article" date="2001" name="Genome Res.">
        <title>Towards a catalog of human genes and proteins: sequencing and analysis of 500 novel complete protein coding human cDNAs.</title>
        <authorList>
            <person name="Wiemann S."/>
            <person name="Weil B."/>
            <person name="Wellenreuther R."/>
            <person name="Gassenhuber J."/>
            <person name="Glassl S."/>
            <person name="Ansorge W."/>
            <person name="Boecher M."/>
            <person name="Bloecker H."/>
            <person name="Bauersachs S."/>
            <person name="Blum H."/>
            <person name="Lauber J."/>
            <person name="Duesterhoeft A."/>
            <person name="Beyer A."/>
            <person name="Koehrer K."/>
            <person name="Strack N."/>
            <person name="Mewes H.-W."/>
            <person name="Ottenwaelder B."/>
            <person name="Obermaier B."/>
            <person name="Tampe J."/>
            <person name="Heubner D."/>
            <person name="Wambutt R."/>
            <person name="Korn B."/>
            <person name="Klein M."/>
            <person name="Poustka A."/>
        </authorList>
    </citation>
    <scope>NUCLEOTIDE SEQUENCE [LARGE SCALE MRNA]</scope>
    <source>
        <tissue>Brain</tissue>
    </source>
</reference>
<reference key="4">
    <citation type="journal article" date="2000" name="Proc. Natl. Acad. Sci. U.S.A.">
        <title>Gene expression profiling in the human hypothalamus-pituitary-adrenal axis and full-length cDNA cloning.</title>
        <authorList>
            <person name="Hu R.-M."/>
            <person name="Han Z.-G."/>
            <person name="Song H.-D."/>
            <person name="Peng Y.-D."/>
            <person name="Huang Q.-H."/>
            <person name="Ren S.-X."/>
            <person name="Gu Y.-J."/>
            <person name="Huang C.-H."/>
            <person name="Li Y.-B."/>
            <person name="Jiang C.-L."/>
            <person name="Fu G."/>
            <person name="Zhang Q.-H."/>
            <person name="Gu B.-W."/>
            <person name="Dai M."/>
            <person name="Mao Y.-F."/>
            <person name="Gao G.-F."/>
            <person name="Rong R."/>
            <person name="Ye M."/>
            <person name="Zhou J."/>
            <person name="Xu S.-H."/>
            <person name="Gu J."/>
            <person name="Shi J.-X."/>
            <person name="Jin W.-R."/>
            <person name="Zhang C.-K."/>
            <person name="Wu T.-M."/>
            <person name="Huang G.-Y."/>
            <person name="Chen Z."/>
            <person name="Chen M.-D."/>
            <person name="Chen J.-L."/>
        </authorList>
    </citation>
    <scope>NUCLEOTIDE SEQUENCE [LARGE SCALE MRNA]</scope>
    <source>
        <tissue>Adrenal gland</tissue>
    </source>
</reference>
<reference key="5">
    <citation type="journal article" date="2003" name="Nature">
        <title>The DNA sequence and analysis of human chromosome 14.</title>
        <authorList>
            <person name="Heilig R."/>
            <person name="Eckenberg R."/>
            <person name="Petit J.-L."/>
            <person name="Fonknechten N."/>
            <person name="Da Silva C."/>
            <person name="Cattolico L."/>
            <person name="Levy M."/>
            <person name="Barbe V."/>
            <person name="De Berardinis V."/>
            <person name="Ureta-Vidal A."/>
            <person name="Pelletier E."/>
            <person name="Vico V."/>
            <person name="Anthouard V."/>
            <person name="Rowen L."/>
            <person name="Madan A."/>
            <person name="Qin S."/>
            <person name="Sun H."/>
            <person name="Du H."/>
            <person name="Pepin K."/>
            <person name="Artiguenave F."/>
            <person name="Robert C."/>
            <person name="Cruaud C."/>
            <person name="Bruels T."/>
            <person name="Jaillon O."/>
            <person name="Friedlander L."/>
            <person name="Samson G."/>
            <person name="Brottier P."/>
            <person name="Cure S."/>
            <person name="Segurens B."/>
            <person name="Aniere F."/>
            <person name="Samain S."/>
            <person name="Crespeau H."/>
            <person name="Abbasi N."/>
            <person name="Aiach N."/>
            <person name="Boscus D."/>
            <person name="Dickhoff R."/>
            <person name="Dors M."/>
            <person name="Dubois I."/>
            <person name="Friedman C."/>
            <person name="Gouyvenoux M."/>
            <person name="James R."/>
            <person name="Madan A."/>
            <person name="Mairey-Estrada B."/>
            <person name="Mangenot S."/>
            <person name="Martins N."/>
            <person name="Menard M."/>
            <person name="Oztas S."/>
            <person name="Ratcliffe A."/>
            <person name="Shaffer T."/>
            <person name="Trask B."/>
            <person name="Vacherie B."/>
            <person name="Bellemere C."/>
            <person name="Belser C."/>
            <person name="Besnard-Gonnet M."/>
            <person name="Bartol-Mavel D."/>
            <person name="Boutard M."/>
            <person name="Briez-Silla S."/>
            <person name="Combette S."/>
            <person name="Dufosse-Laurent V."/>
            <person name="Ferron C."/>
            <person name="Lechaplais C."/>
            <person name="Louesse C."/>
            <person name="Muselet D."/>
            <person name="Magdelenat G."/>
            <person name="Pateau E."/>
            <person name="Petit E."/>
            <person name="Sirvain-Trukniewicz P."/>
            <person name="Trybou A."/>
            <person name="Vega-Czarny N."/>
            <person name="Bataille E."/>
            <person name="Bluet E."/>
            <person name="Bordelais I."/>
            <person name="Dubois M."/>
            <person name="Dumont C."/>
            <person name="Guerin T."/>
            <person name="Haffray S."/>
            <person name="Hammadi R."/>
            <person name="Muanga J."/>
            <person name="Pellouin V."/>
            <person name="Robert D."/>
            <person name="Wunderle E."/>
            <person name="Gauguet G."/>
            <person name="Roy A."/>
            <person name="Sainte-Marthe L."/>
            <person name="Verdier J."/>
            <person name="Verdier-Discala C."/>
            <person name="Hillier L.W."/>
            <person name="Fulton L."/>
            <person name="McPherson J."/>
            <person name="Matsuda F."/>
            <person name="Wilson R."/>
            <person name="Scarpelli C."/>
            <person name="Gyapay G."/>
            <person name="Wincker P."/>
            <person name="Saurin W."/>
            <person name="Quetier F."/>
            <person name="Waterston R."/>
            <person name="Hood L."/>
            <person name="Weissenbach J."/>
        </authorList>
    </citation>
    <scope>NUCLEOTIDE SEQUENCE [LARGE SCALE GENOMIC DNA]</scope>
</reference>
<reference key="6">
    <citation type="journal article" date="2004" name="Genome Res.">
        <title>The status, quality, and expansion of the NIH full-length cDNA project: the Mammalian Gene Collection (MGC).</title>
        <authorList>
            <consortium name="The MGC Project Team"/>
        </authorList>
    </citation>
    <scope>NUCLEOTIDE SEQUENCE [LARGE SCALE MRNA]</scope>
    <source>
        <tissue>Kidney</tissue>
    </source>
</reference>
<reference key="7">
    <citation type="journal article" date="2011" name="BMC Syst. Biol.">
        <title>Initial characterization of the human central proteome.</title>
        <authorList>
            <person name="Burkard T.R."/>
            <person name="Planyavsky M."/>
            <person name="Kaupe I."/>
            <person name="Breitwieser F.P."/>
            <person name="Buerckstuemmer T."/>
            <person name="Bennett K.L."/>
            <person name="Superti-Furga G."/>
            <person name="Colinge J."/>
        </authorList>
    </citation>
    <scope>IDENTIFICATION BY MASS SPECTROMETRY [LARGE SCALE ANALYSIS]</scope>
</reference>
<reference key="8">
    <citation type="journal article" date="2015" name="Proteomics">
        <title>N-terminome analysis of the human mitochondrial proteome.</title>
        <authorList>
            <person name="Vaca Jacome A.S."/>
            <person name="Rabilloud T."/>
            <person name="Schaeffer-Reiss C."/>
            <person name="Rompais M."/>
            <person name="Ayoub D."/>
            <person name="Lane L."/>
            <person name="Bairoch A."/>
            <person name="Van Dorsselaer A."/>
            <person name="Carapito C."/>
        </authorList>
    </citation>
    <scope>IDENTIFICATION BY MASS SPECTROMETRY [LARGE SCALE ANALYSIS]</scope>
</reference>
<name>ERG28_HUMAN</name>
<evidence type="ECO:0000255" key="1"/>
<evidence type="ECO:0000305" key="2"/>
<evidence type="ECO:0000312" key="3">
    <source>
        <dbReference type="HGNC" id="HGNC:1187"/>
    </source>
</evidence>
<organism>
    <name type="scientific">Homo sapiens</name>
    <name type="common">Human</name>
    <dbReference type="NCBI Taxonomy" id="9606"/>
    <lineage>
        <taxon>Eukaryota</taxon>
        <taxon>Metazoa</taxon>
        <taxon>Chordata</taxon>
        <taxon>Craniata</taxon>
        <taxon>Vertebrata</taxon>
        <taxon>Euteleostomi</taxon>
        <taxon>Mammalia</taxon>
        <taxon>Eutheria</taxon>
        <taxon>Euarchontoglires</taxon>
        <taxon>Primates</taxon>
        <taxon>Haplorrhini</taxon>
        <taxon>Catarrhini</taxon>
        <taxon>Hominidae</taxon>
        <taxon>Homo</taxon>
    </lineage>
</organism>